<protein>
    <recommendedName>
        <fullName evidence="1">Ribosome maturation factor RimM</fullName>
    </recommendedName>
</protein>
<dbReference type="EMBL" id="AL111168">
    <property type="protein sequence ID" value="CAL34849.1"/>
    <property type="molecule type" value="Genomic_DNA"/>
</dbReference>
<dbReference type="PIR" id="C81342">
    <property type="entry name" value="C81342"/>
</dbReference>
<dbReference type="RefSeq" id="WP_002852323.1">
    <property type="nucleotide sequence ID" value="NZ_SZUC01000002.1"/>
</dbReference>
<dbReference type="RefSeq" id="YP_002344130.1">
    <property type="nucleotide sequence ID" value="NC_002163.1"/>
</dbReference>
<dbReference type="SMR" id="Q9PPJ5"/>
<dbReference type="IntAct" id="Q9PPJ5">
    <property type="interactions" value="21"/>
</dbReference>
<dbReference type="STRING" id="192222.Cj0712"/>
<dbReference type="PaxDb" id="192222-Cj0712"/>
<dbReference type="DNASU" id="904519"/>
<dbReference type="EnsemblBacteria" id="CAL34849">
    <property type="protein sequence ID" value="CAL34849"/>
    <property type="gene ID" value="Cj0712"/>
</dbReference>
<dbReference type="GeneID" id="904519"/>
<dbReference type="KEGG" id="cje:Cj0712"/>
<dbReference type="PATRIC" id="fig|192222.6.peg.704"/>
<dbReference type="eggNOG" id="COG0806">
    <property type="taxonomic scope" value="Bacteria"/>
</dbReference>
<dbReference type="HOGENOM" id="CLU_077636_2_0_7"/>
<dbReference type="OrthoDB" id="9810331at2"/>
<dbReference type="Proteomes" id="UP000000799">
    <property type="component" value="Chromosome"/>
</dbReference>
<dbReference type="GO" id="GO:0005737">
    <property type="term" value="C:cytoplasm"/>
    <property type="evidence" value="ECO:0007669"/>
    <property type="project" value="UniProtKB-SubCell"/>
</dbReference>
<dbReference type="GO" id="GO:0005840">
    <property type="term" value="C:ribosome"/>
    <property type="evidence" value="ECO:0007669"/>
    <property type="project" value="InterPro"/>
</dbReference>
<dbReference type="GO" id="GO:0043022">
    <property type="term" value="F:ribosome binding"/>
    <property type="evidence" value="ECO:0007669"/>
    <property type="project" value="InterPro"/>
</dbReference>
<dbReference type="GO" id="GO:0042274">
    <property type="term" value="P:ribosomal small subunit biogenesis"/>
    <property type="evidence" value="ECO:0007669"/>
    <property type="project" value="UniProtKB-UniRule"/>
</dbReference>
<dbReference type="GO" id="GO:0006364">
    <property type="term" value="P:rRNA processing"/>
    <property type="evidence" value="ECO:0007669"/>
    <property type="project" value="UniProtKB-UniRule"/>
</dbReference>
<dbReference type="Gene3D" id="2.30.30.240">
    <property type="entry name" value="PRC-barrel domain"/>
    <property type="match status" value="1"/>
</dbReference>
<dbReference type="Gene3D" id="2.40.30.60">
    <property type="entry name" value="RimM"/>
    <property type="match status" value="1"/>
</dbReference>
<dbReference type="HAMAP" id="MF_00014">
    <property type="entry name" value="Ribosome_mat_RimM"/>
    <property type="match status" value="1"/>
</dbReference>
<dbReference type="InterPro" id="IPR027275">
    <property type="entry name" value="PRC-brl_dom"/>
</dbReference>
<dbReference type="InterPro" id="IPR011033">
    <property type="entry name" value="PRC_barrel-like_sf"/>
</dbReference>
<dbReference type="InterPro" id="IPR011961">
    <property type="entry name" value="RimM"/>
</dbReference>
<dbReference type="InterPro" id="IPR002676">
    <property type="entry name" value="RimM_N"/>
</dbReference>
<dbReference type="InterPro" id="IPR036976">
    <property type="entry name" value="RimM_N_sf"/>
</dbReference>
<dbReference type="InterPro" id="IPR009000">
    <property type="entry name" value="Transl_B-barrel_sf"/>
</dbReference>
<dbReference type="NCBIfam" id="TIGR02273">
    <property type="entry name" value="16S_RimM"/>
    <property type="match status" value="1"/>
</dbReference>
<dbReference type="PANTHER" id="PTHR33692">
    <property type="entry name" value="RIBOSOME MATURATION FACTOR RIMM"/>
    <property type="match status" value="1"/>
</dbReference>
<dbReference type="PANTHER" id="PTHR33692:SF1">
    <property type="entry name" value="RIBOSOME MATURATION FACTOR RIMM"/>
    <property type="match status" value="1"/>
</dbReference>
<dbReference type="Pfam" id="PF05239">
    <property type="entry name" value="PRC"/>
    <property type="match status" value="1"/>
</dbReference>
<dbReference type="Pfam" id="PF01782">
    <property type="entry name" value="RimM"/>
    <property type="match status" value="1"/>
</dbReference>
<dbReference type="SUPFAM" id="SSF50346">
    <property type="entry name" value="PRC-barrel domain"/>
    <property type="match status" value="1"/>
</dbReference>
<dbReference type="SUPFAM" id="SSF50447">
    <property type="entry name" value="Translation proteins"/>
    <property type="match status" value="1"/>
</dbReference>
<name>RIMM_CAMJE</name>
<feature type="chain" id="PRO_0000163271" description="Ribosome maturation factor RimM">
    <location>
        <begin position="1"/>
        <end position="179"/>
    </location>
</feature>
<feature type="domain" description="PRC barrel" evidence="1">
    <location>
        <begin position="95"/>
        <end position="174"/>
    </location>
</feature>
<reference key="1">
    <citation type="journal article" date="2000" name="Nature">
        <title>The genome sequence of the food-borne pathogen Campylobacter jejuni reveals hypervariable sequences.</title>
        <authorList>
            <person name="Parkhill J."/>
            <person name="Wren B.W."/>
            <person name="Mungall K.L."/>
            <person name="Ketley J.M."/>
            <person name="Churcher C.M."/>
            <person name="Basham D."/>
            <person name="Chillingworth T."/>
            <person name="Davies R.M."/>
            <person name="Feltwell T."/>
            <person name="Holroyd S."/>
            <person name="Jagels K."/>
            <person name="Karlyshev A.V."/>
            <person name="Moule S."/>
            <person name="Pallen M.J."/>
            <person name="Penn C.W."/>
            <person name="Quail M.A."/>
            <person name="Rajandream M.A."/>
            <person name="Rutherford K.M."/>
            <person name="van Vliet A.H.M."/>
            <person name="Whitehead S."/>
            <person name="Barrell B.G."/>
        </authorList>
    </citation>
    <scope>NUCLEOTIDE SEQUENCE [LARGE SCALE GENOMIC DNA]</scope>
    <source>
        <strain>ATCC 700819 / NCTC 11168</strain>
    </source>
</reference>
<comment type="function">
    <text evidence="1">An accessory protein needed during the final step in the assembly of 30S ribosomal subunit, possibly for assembly of the head region. Essential for efficient processing of 16S rRNA. May be needed both before and after RbfA during the maturation of 16S rRNA. It has affinity for free ribosomal 30S subunits but not for 70S ribosomes.</text>
</comment>
<comment type="subunit">
    <text evidence="1">Binds ribosomal protein uS19.</text>
</comment>
<comment type="subcellular location">
    <subcellularLocation>
        <location evidence="1">Cytoplasm</location>
    </subcellularLocation>
</comment>
<comment type="domain">
    <text evidence="1">The PRC barrel domain binds ribosomal protein uS19.</text>
</comment>
<comment type="similarity">
    <text evidence="1">Belongs to the RimM family.</text>
</comment>
<gene>
    <name evidence="1" type="primary">rimM</name>
    <name type="ordered locus">Cj0712</name>
</gene>
<keyword id="KW-0143">Chaperone</keyword>
<keyword id="KW-0963">Cytoplasm</keyword>
<keyword id="KW-1185">Reference proteome</keyword>
<keyword id="KW-0690">Ribosome biogenesis</keyword>
<keyword id="KW-0698">rRNA processing</keyword>
<organism>
    <name type="scientific">Campylobacter jejuni subsp. jejuni serotype O:2 (strain ATCC 700819 / NCTC 11168)</name>
    <dbReference type="NCBI Taxonomy" id="192222"/>
    <lineage>
        <taxon>Bacteria</taxon>
        <taxon>Pseudomonadati</taxon>
        <taxon>Campylobacterota</taxon>
        <taxon>Epsilonproteobacteria</taxon>
        <taxon>Campylobacterales</taxon>
        <taxon>Campylobacteraceae</taxon>
        <taxon>Campylobacter</taxon>
    </lineage>
</organism>
<accession>Q9PPJ5</accession>
<accession>Q0PAG7</accession>
<sequence length="179" mass="21209">MSEKDFVQVAKLGKTVGLKGYVKLHNLSDFSSQFKKDATFFIKNTKEMLKIKHYNANNSTVLFENYEDIEKAKELTNLILFQSIEKSRQTCKLKKDEFFYFDILECEVFEEDKRLGKVVDILETGASYLFEIQSDEKWVEKKYPKIFFIPYLDKFVKNIDIEKRQIFCTQDAFLILENS</sequence>
<proteinExistence type="inferred from homology"/>
<evidence type="ECO:0000255" key="1">
    <source>
        <dbReference type="HAMAP-Rule" id="MF_00014"/>
    </source>
</evidence>